<name>YDHI_BACSU</name>
<keyword id="KW-1185">Reference proteome</keyword>
<organism>
    <name type="scientific">Bacillus subtilis (strain 168)</name>
    <dbReference type="NCBI Taxonomy" id="224308"/>
    <lineage>
        <taxon>Bacteria</taxon>
        <taxon>Bacillati</taxon>
        <taxon>Bacillota</taxon>
        <taxon>Bacilli</taxon>
        <taxon>Bacillales</taxon>
        <taxon>Bacillaceae</taxon>
        <taxon>Bacillus</taxon>
    </lineage>
</organism>
<accession>O05501</accession>
<sequence>MMIIIPNNEIAKHMLTDFFAKHWGTPEMAISSGIFRCDELDGFAAVNESGEIIGCITYTIDGKDCEIISLDSMIENKGIGTALLQQVEEKAKHAHCQRIKLITTNDNVNAIAFYQKRGYQFAAVFPNAVEKARRLKPEIPEVAENGILIRDEILFSKVID</sequence>
<proteinExistence type="predicted"/>
<reference key="1">
    <citation type="journal article" date="1997" name="Microbiology">
        <title>Nucleotide sequence and analysis of the phoB-rrnE-groESL region of the Bacillus subtilis chromosome.</title>
        <authorList>
            <person name="Sadaie Y."/>
            <person name="Yata K."/>
            <person name="Fujita M."/>
            <person name="Sagai H."/>
            <person name="Itaya M."/>
            <person name="Kasahara Y."/>
            <person name="Ogasawara N."/>
        </authorList>
    </citation>
    <scope>NUCLEOTIDE SEQUENCE [GENOMIC DNA]</scope>
    <source>
        <strain>168 / JH642</strain>
    </source>
</reference>
<reference key="2">
    <citation type="journal article" date="1997" name="Nature">
        <title>The complete genome sequence of the Gram-positive bacterium Bacillus subtilis.</title>
        <authorList>
            <person name="Kunst F."/>
            <person name="Ogasawara N."/>
            <person name="Moszer I."/>
            <person name="Albertini A.M."/>
            <person name="Alloni G."/>
            <person name="Azevedo V."/>
            <person name="Bertero M.G."/>
            <person name="Bessieres P."/>
            <person name="Bolotin A."/>
            <person name="Borchert S."/>
            <person name="Borriss R."/>
            <person name="Boursier L."/>
            <person name="Brans A."/>
            <person name="Braun M."/>
            <person name="Brignell S.C."/>
            <person name="Bron S."/>
            <person name="Brouillet S."/>
            <person name="Bruschi C.V."/>
            <person name="Caldwell B."/>
            <person name="Capuano V."/>
            <person name="Carter N.M."/>
            <person name="Choi S.-K."/>
            <person name="Codani J.-J."/>
            <person name="Connerton I.F."/>
            <person name="Cummings N.J."/>
            <person name="Daniel R.A."/>
            <person name="Denizot F."/>
            <person name="Devine K.M."/>
            <person name="Duesterhoeft A."/>
            <person name="Ehrlich S.D."/>
            <person name="Emmerson P.T."/>
            <person name="Entian K.-D."/>
            <person name="Errington J."/>
            <person name="Fabret C."/>
            <person name="Ferrari E."/>
            <person name="Foulger D."/>
            <person name="Fritz C."/>
            <person name="Fujita M."/>
            <person name="Fujita Y."/>
            <person name="Fuma S."/>
            <person name="Galizzi A."/>
            <person name="Galleron N."/>
            <person name="Ghim S.-Y."/>
            <person name="Glaser P."/>
            <person name="Goffeau A."/>
            <person name="Golightly E.J."/>
            <person name="Grandi G."/>
            <person name="Guiseppi G."/>
            <person name="Guy B.J."/>
            <person name="Haga K."/>
            <person name="Haiech J."/>
            <person name="Harwood C.R."/>
            <person name="Henaut A."/>
            <person name="Hilbert H."/>
            <person name="Holsappel S."/>
            <person name="Hosono S."/>
            <person name="Hullo M.-F."/>
            <person name="Itaya M."/>
            <person name="Jones L.-M."/>
            <person name="Joris B."/>
            <person name="Karamata D."/>
            <person name="Kasahara Y."/>
            <person name="Klaerr-Blanchard M."/>
            <person name="Klein C."/>
            <person name="Kobayashi Y."/>
            <person name="Koetter P."/>
            <person name="Koningstein G."/>
            <person name="Krogh S."/>
            <person name="Kumano M."/>
            <person name="Kurita K."/>
            <person name="Lapidus A."/>
            <person name="Lardinois S."/>
            <person name="Lauber J."/>
            <person name="Lazarevic V."/>
            <person name="Lee S.-M."/>
            <person name="Levine A."/>
            <person name="Liu H."/>
            <person name="Masuda S."/>
            <person name="Mauel C."/>
            <person name="Medigue C."/>
            <person name="Medina N."/>
            <person name="Mellado R.P."/>
            <person name="Mizuno M."/>
            <person name="Moestl D."/>
            <person name="Nakai S."/>
            <person name="Noback M."/>
            <person name="Noone D."/>
            <person name="O'Reilly M."/>
            <person name="Ogawa K."/>
            <person name="Ogiwara A."/>
            <person name="Oudega B."/>
            <person name="Park S.-H."/>
            <person name="Parro V."/>
            <person name="Pohl T.M."/>
            <person name="Portetelle D."/>
            <person name="Porwollik S."/>
            <person name="Prescott A.M."/>
            <person name="Presecan E."/>
            <person name="Pujic P."/>
            <person name="Purnelle B."/>
            <person name="Rapoport G."/>
            <person name="Rey M."/>
            <person name="Reynolds S."/>
            <person name="Rieger M."/>
            <person name="Rivolta C."/>
            <person name="Rocha E."/>
            <person name="Roche B."/>
            <person name="Rose M."/>
            <person name="Sadaie Y."/>
            <person name="Sato T."/>
            <person name="Scanlan E."/>
            <person name="Schleich S."/>
            <person name="Schroeter R."/>
            <person name="Scoffone F."/>
            <person name="Sekiguchi J."/>
            <person name="Sekowska A."/>
            <person name="Seror S.J."/>
            <person name="Serror P."/>
            <person name="Shin B.-S."/>
            <person name="Soldo B."/>
            <person name="Sorokin A."/>
            <person name="Tacconi E."/>
            <person name="Takagi T."/>
            <person name="Takahashi H."/>
            <person name="Takemaru K."/>
            <person name="Takeuchi M."/>
            <person name="Tamakoshi A."/>
            <person name="Tanaka T."/>
            <person name="Terpstra P."/>
            <person name="Tognoni A."/>
            <person name="Tosato V."/>
            <person name="Uchiyama S."/>
            <person name="Vandenbol M."/>
            <person name="Vannier F."/>
            <person name="Vassarotti A."/>
            <person name="Viari A."/>
            <person name="Wambutt R."/>
            <person name="Wedler E."/>
            <person name="Wedler H."/>
            <person name="Weitzenegger T."/>
            <person name="Winters P."/>
            <person name="Wipat A."/>
            <person name="Yamamoto H."/>
            <person name="Yamane K."/>
            <person name="Yasumoto K."/>
            <person name="Yata K."/>
            <person name="Yoshida K."/>
            <person name="Yoshikawa H.-F."/>
            <person name="Zumstein E."/>
            <person name="Yoshikawa H."/>
            <person name="Danchin A."/>
        </authorList>
    </citation>
    <scope>NUCLEOTIDE SEQUENCE [LARGE SCALE GENOMIC DNA]</scope>
    <source>
        <strain>168</strain>
    </source>
</reference>
<feature type="chain" id="PRO_0000049506" description="Uncharacterized protein YdhI">
    <location>
        <begin position="1"/>
        <end position="160"/>
    </location>
</feature>
<feature type="domain" description="N-acetyltransferase" evidence="1">
    <location>
        <begin position="2"/>
        <end position="140"/>
    </location>
</feature>
<dbReference type="EMBL" id="D88802">
    <property type="protein sequence ID" value="BAA19701.1"/>
    <property type="molecule type" value="Genomic_DNA"/>
</dbReference>
<dbReference type="EMBL" id="AL009126">
    <property type="protein sequence ID" value="CAB12396.1"/>
    <property type="molecule type" value="Genomic_DNA"/>
</dbReference>
<dbReference type="PIR" id="E69784">
    <property type="entry name" value="E69784"/>
</dbReference>
<dbReference type="RefSeq" id="NP_388458.1">
    <property type="nucleotide sequence ID" value="NC_000964.3"/>
</dbReference>
<dbReference type="RefSeq" id="WP_010886425.1">
    <property type="nucleotide sequence ID" value="NZ_OZ025638.1"/>
</dbReference>
<dbReference type="SMR" id="O05501"/>
<dbReference type="FunCoup" id="O05501">
    <property type="interactions" value="46"/>
</dbReference>
<dbReference type="IntAct" id="O05501">
    <property type="interactions" value="1"/>
</dbReference>
<dbReference type="STRING" id="224308.BSU05770"/>
<dbReference type="PaxDb" id="224308-BSU05770"/>
<dbReference type="EnsemblBacteria" id="CAB12396">
    <property type="protein sequence ID" value="CAB12396"/>
    <property type="gene ID" value="BSU_05770"/>
</dbReference>
<dbReference type="GeneID" id="939866"/>
<dbReference type="KEGG" id="bsu:BSU05770"/>
<dbReference type="PATRIC" id="fig|224308.43.peg.605"/>
<dbReference type="eggNOG" id="COG0454">
    <property type="taxonomic scope" value="Bacteria"/>
</dbReference>
<dbReference type="InParanoid" id="O05501"/>
<dbReference type="OrthoDB" id="7365228at2"/>
<dbReference type="PhylomeDB" id="O05501"/>
<dbReference type="BioCyc" id="BSUB:BSU05770-MONOMER"/>
<dbReference type="Proteomes" id="UP000001570">
    <property type="component" value="Chromosome"/>
</dbReference>
<dbReference type="GO" id="GO:0016747">
    <property type="term" value="F:acyltransferase activity, transferring groups other than amino-acyl groups"/>
    <property type="evidence" value="ECO:0007669"/>
    <property type="project" value="InterPro"/>
</dbReference>
<dbReference type="CDD" id="cd04301">
    <property type="entry name" value="NAT_SF"/>
    <property type="match status" value="1"/>
</dbReference>
<dbReference type="FunFam" id="3.40.630.30:FF:000082">
    <property type="entry name" value="Acetyltransferase, GNAT family"/>
    <property type="match status" value="1"/>
</dbReference>
<dbReference type="Gene3D" id="3.40.630.30">
    <property type="match status" value="1"/>
</dbReference>
<dbReference type="InterPro" id="IPR016181">
    <property type="entry name" value="Acyl_CoA_acyltransferase"/>
</dbReference>
<dbReference type="InterPro" id="IPR000182">
    <property type="entry name" value="GNAT_dom"/>
</dbReference>
<dbReference type="InterPro" id="IPR051556">
    <property type="entry name" value="N-term/lysine_N-AcTrnsfr"/>
</dbReference>
<dbReference type="PANTHER" id="PTHR42919:SF26">
    <property type="entry name" value="ACETYLTRANSFERASE"/>
    <property type="match status" value="1"/>
</dbReference>
<dbReference type="PANTHER" id="PTHR42919">
    <property type="entry name" value="N-ALPHA-ACETYLTRANSFERASE"/>
    <property type="match status" value="1"/>
</dbReference>
<dbReference type="Pfam" id="PF00583">
    <property type="entry name" value="Acetyltransf_1"/>
    <property type="match status" value="1"/>
</dbReference>
<dbReference type="SUPFAM" id="SSF55729">
    <property type="entry name" value="Acyl-CoA N-acyltransferases (Nat)"/>
    <property type="match status" value="1"/>
</dbReference>
<dbReference type="PROSITE" id="PS51186">
    <property type="entry name" value="GNAT"/>
    <property type="match status" value="1"/>
</dbReference>
<evidence type="ECO:0000255" key="1">
    <source>
        <dbReference type="PROSITE-ProRule" id="PRU00532"/>
    </source>
</evidence>
<protein>
    <recommendedName>
        <fullName>Uncharacterized protein YdhI</fullName>
    </recommendedName>
</protein>
<gene>
    <name type="primary">ydhI</name>
    <name type="ordered locus">BSU05770</name>
</gene>